<comment type="similarity">
    <text evidence="1">Belongs to the UPF0246 family.</text>
</comment>
<sequence length="257" mass="28932">MLILVSPAKTLDFEQPPLTQTHTRPDFLAYSQELIQVCQRLTPSDIATLMKVSDNIAGLNAARFGEWTPDYSIANAKQAIFAFRGDVYTGVDADTLTPEQLERTQSQLRILSGLYGLLRPLDLILPYRLEMGTALANPKGKNLYDFWGNILTEAVNRAVAEQGDELIINLASNEYFKAVKPKQLTGQLITPVFKDFKNGQYKVISFFAKKARGMMARYIIDQQVSSIDELKAFDVAGYYYSEELSKPNEPTFLREAQ</sequence>
<accession>Q0HFY3</accession>
<dbReference type="EMBL" id="CP000446">
    <property type="protein sequence ID" value="ABI40034.1"/>
    <property type="molecule type" value="Genomic_DNA"/>
</dbReference>
<dbReference type="RefSeq" id="WP_011623710.1">
    <property type="nucleotide sequence ID" value="NC_008321.1"/>
</dbReference>
<dbReference type="SMR" id="Q0HFY3"/>
<dbReference type="KEGG" id="she:Shewmr4_2963"/>
<dbReference type="HOGENOM" id="CLU_061989_0_0_6"/>
<dbReference type="GO" id="GO:0005829">
    <property type="term" value="C:cytosol"/>
    <property type="evidence" value="ECO:0007669"/>
    <property type="project" value="TreeGrafter"/>
</dbReference>
<dbReference type="GO" id="GO:0033194">
    <property type="term" value="P:response to hydroperoxide"/>
    <property type="evidence" value="ECO:0007669"/>
    <property type="project" value="TreeGrafter"/>
</dbReference>
<dbReference type="HAMAP" id="MF_00652">
    <property type="entry name" value="UPF0246"/>
    <property type="match status" value="1"/>
</dbReference>
<dbReference type="InterPro" id="IPR005583">
    <property type="entry name" value="YaaA"/>
</dbReference>
<dbReference type="NCBIfam" id="NF002541">
    <property type="entry name" value="PRK02101.1-1"/>
    <property type="match status" value="1"/>
</dbReference>
<dbReference type="NCBIfam" id="NF002542">
    <property type="entry name" value="PRK02101.1-3"/>
    <property type="match status" value="1"/>
</dbReference>
<dbReference type="PANTHER" id="PTHR30283:SF4">
    <property type="entry name" value="PEROXIDE STRESS RESISTANCE PROTEIN YAAA"/>
    <property type="match status" value="1"/>
</dbReference>
<dbReference type="PANTHER" id="PTHR30283">
    <property type="entry name" value="PEROXIDE STRESS RESPONSE PROTEIN YAAA"/>
    <property type="match status" value="1"/>
</dbReference>
<dbReference type="Pfam" id="PF03883">
    <property type="entry name" value="H2O2_YaaD"/>
    <property type="match status" value="1"/>
</dbReference>
<organism>
    <name type="scientific">Shewanella sp. (strain MR-4)</name>
    <dbReference type="NCBI Taxonomy" id="60480"/>
    <lineage>
        <taxon>Bacteria</taxon>
        <taxon>Pseudomonadati</taxon>
        <taxon>Pseudomonadota</taxon>
        <taxon>Gammaproteobacteria</taxon>
        <taxon>Alteromonadales</taxon>
        <taxon>Shewanellaceae</taxon>
        <taxon>Shewanella</taxon>
    </lineage>
</organism>
<feature type="chain" id="PRO_0000262058" description="UPF0246 protein Shewmr4_2963">
    <location>
        <begin position="1"/>
        <end position="257"/>
    </location>
</feature>
<gene>
    <name type="ordered locus">Shewmr4_2963</name>
</gene>
<protein>
    <recommendedName>
        <fullName evidence="1">UPF0246 protein Shewmr4_2963</fullName>
    </recommendedName>
</protein>
<reference key="1">
    <citation type="submission" date="2006-08" db="EMBL/GenBank/DDBJ databases">
        <title>Complete sequence of Shewanella sp. MR-4.</title>
        <authorList>
            <consortium name="US DOE Joint Genome Institute"/>
            <person name="Copeland A."/>
            <person name="Lucas S."/>
            <person name="Lapidus A."/>
            <person name="Barry K."/>
            <person name="Detter J.C."/>
            <person name="Glavina del Rio T."/>
            <person name="Hammon N."/>
            <person name="Israni S."/>
            <person name="Dalin E."/>
            <person name="Tice H."/>
            <person name="Pitluck S."/>
            <person name="Kiss H."/>
            <person name="Brettin T."/>
            <person name="Bruce D."/>
            <person name="Han C."/>
            <person name="Tapia R."/>
            <person name="Gilna P."/>
            <person name="Schmutz J."/>
            <person name="Larimer F."/>
            <person name="Land M."/>
            <person name="Hauser L."/>
            <person name="Kyrpides N."/>
            <person name="Mikhailova N."/>
            <person name="Nealson K."/>
            <person name="Konstantinidis K."/>
            <person name="Klappenbach J."/>
            <person name="Tiedje J."/>
            <person name="Richardson P."/>
        </authorList>
    </citation>
    <scope>NUCLEOTIDE SEQUENCE [LARGE SCALE GENOMIC DNA]</scope>
    <source>
        <strain>MR-4</strain>
    </source>
</reference>
<evidence type="ECO:0000255" key="1">
    <source>
        <dbReference type="HAMAP-Rule" id="MF_00652"/>
    </source>
</evidence>
<name>Y2963_SHESM</name>
<proteinExistence type="inferred from homology"/>